<accession>A5VIG5</accession>
<dbReference type="EC" id="2.5.1.145" evidence="1"/>
<dbReference type="EMBL" id="CP000705">
    <property type="protein sequence ID" value="ABQ82639.1"/>
    <property type="molecule type" value="Genomic_DNA"/>
</dbReference>
<dbReference type="RefSeq" id="WP_003667441.1">
    <property type="nucleotide sequence ID" value="NC_009513.1"/>
</dbReference>
<dbReference type="SMR" id="A5VIG5"/>
<dbReference type="STRING" id="557436.Lreu_0370"/>
<dbReference type="KEGG" id="lre:Lreu_0370"/>
<dbReference type="PATRIC" id="fig|557436.17.peg.410"/>
<dbReference type="eggNOG" id="COG0682">
    <property type="taxonomic scope" value="Bacteria"/>
</dbReference>
<dbReference type="HOGENOM" id="CLU_013386_1_2_9"/>
<dbReference type="UniPathway" id="UPA00664"/>
<dbReference type="Proteomes" id="UP000001991">
    <property type="component" value="Chromosome"/>
</dbReference>
<dbReference type="GO" id="GO:0005886">
    <property type="term" value="C:plasma membrane"/>
    <property type="evidence" value="ECO:0007669"/>
    <property type="project" value="UniProtKB-SubCell"/>
</dbReference>
<dbReference type="GO" id="GO:0008961">
    <property type="term" value="F:phosphatidylglycerol-prolipoprotein diacylglyceryl transferase activity"/>
    <property type="evidence" value="ECO:0007669"/>
    <property type="project" value="UniProtKB-UniRule"/>
</dbReference>
<dbReference type="GO" id="GO:0042158">
    <property type="term" value="P:lipoprotein biosynthetic process"/>
    <property type="evidence" value="ECO:0007669"/>
    <property type="project" value="UniProtKB-UniRule"/>
</dbReference>
<dbReference type="HAMAP" id="MF_01147">
    <property type="entry name" value="Lgt"/>
    <property type="match status" value="1"/>
</dbReference>
<dbReference type="InterPro" id="IPR001640">
    <property type="entry name" value="Lgt"/>
</dbReference>
<dbReference type="NCBIfam" id="TIGR00544">
    <property type="entry name" value="lgt"/>
    <property type="match status" value="1"/>
</dbReference>
<dbReference type="PANTHER" id="PTHR30589:SF0">
    <property type="entry name" value="PHOSPHATIDYLGLYCEROL--PROLIPOPROTEIN DIACYLGLYCERYL TRANSFERASE"/>
    <property type="match status" value="1"/>
</dbReference>
<dbReference type="PANTHER" id="PTHR30589">
    <property type="entry name" value="PROLIPOPROTEIN DIACYLGLYCERYL TRANSFERASE"/>
    <property type="match status" value="1"/>
</dbReference>
<dbReference type="Pfam" id="PF01790">
    <property type="entry name" value="LGT"/>
    <property type="match status" value="1"/>
</dbReference>
<dbReference type="PROSITE" id="PS01311">
    <property type="entry name" value="LGT"/>
    <property type="match status" value="1"/>
</dbReference>
<evidence type="ECO:0000255" key="1">
    <source>
        <dbReference type="HAMAP-Rule" id="MF_01147"/>
    </source>
</evidence>
<reference key="1">
    <citation type="journal article" date="2011" name="PLoS Genet.">
        <title>The evolution of host specialization in the vertebrate gut symbiont Lactobacillus reuteri.</title>
        <authorList>
            <person name="Frese S.A."/>
            <person name="Benson A.K."/>
            <person name="Tannock G.W."/>
            <person name="Loach D.M."/>
            <person name="Kim J."/>
            <person name="Zhang M."/>
            <person name="Oh P.L."/>
            <person name="Heng N.C."/>
            <person name="Patil P.B."/>
            <person name="Juge N."/>
            <person name="Mackenzie D.A."/>
            <person name="Pearson B.M."/>
            <person name="Lapidus A."/>
            <person name="Dalin E."/>
            <person name="Tice H."/>
            <person name="Goltsman E."/>
            <person name="Land M."/>
            <person name="Hauser L."/>
            <person name="Ivanova N."/>
            <person name="Kyrpides N.C."/>
            <person name="Walter J."/>
        </authorList>
    </citation>
    <scope>NUCLEOTIDE SEQUENCE [LARGE SCALE GENOMIC DNA]</scope>
    <source>
        <strain>DSM 20016</strain>
    </source>
</reference>
<gene>
    <name evidence="1" type="primary">lgt</name>
    <name type="ordered locus">Lreu_0370</name>
</gene>
<organism>
    <name type="scientific">Limosilactobacillus reuteri (strain DSM 20016)</name>
    <name type="common">Lactobacillus reuteri</name>
    <dbReference type="NCBI Taxonomy" id="557436"/>
    <lineage>
        <taxon>Bacteria</taxon>
        <taxon>Bacillati</taxon>
        <taxon>Bacillota</taxon>
        <taxon>Bacilli</taxon>
        <taxon>Lactobacillales</taxon>
        <taxon>Lactobacillaceae</taxon>
        <taxon>Limosilactobacillus</taxon>
    </lineage>
</organism>
<name>LGT_LIMRD</name>
<protein>
    <recommendedName>
        <fullName evidence="1">Phosphatidylglycerol--prolipoprotein diacylglyceryl transferase</fullName>
        <ecNumber evidence="1">2.5.1.145</ecNumber>
    </recommendedName>
</protein>
<feature type="chain" id="PRO_1000085077" description="Phosphatidylglycerol--prolipoprotein diacylglyceryl transferase">
    <location>
        <begin position="1"/>
        <end position="275"/>
    </location>
</feature>
<feature type="transmembrane region" description="Helical" evidence="1">
    <location>
        <begin position="20"/>
        <end position="40"/>
    </location>
</feature>
<feature type="transmembrane region" description="Helical" evidence="1">
    <location>
        <begin position="58"/>
        <end position="78"/>
    </location>
</feature>
<feature type="transmembrane region" description="Helical" evidence="1">
    <location>
        <begin position="88"/>
        <end position="108"/>
    </location>
</feature>
<feature type="transmembrane region" description="Helical" evidence="1">
    <location>
        <begin position="118"/>
        <end position="138"/>
    </location>
</feature>
<feature type="transmembrane region" description="Helical" evidence="1">
    <location>
        <begin position="209"/>
        <end position="229"/>
    </location>
</feature>
<feature type="transmembrane region" description="Helical" evidence="1">
    <location>
        <begin position="239"/>
        <end position="259"/>
    </location>
</feature>
<feature type="binding site" evidence="1">
    <location>
        <position position="139"/>
    </location>
    <ligand>
        <name>a 1,2-diacyl-sn-glycero-3-phospho-(1'-sn-glycerol)</name>
        <dbReference type="ChEBI" id="CHEBI:64716"/>
    </ligand>
</feature>
<sequence>MINQGIKAALNPIAFQGGPFTIHWYGVIIASGVVLALLLAVREGKREGIPEDDFYDYLLWALPIAIICARIYYVVFQWSYYSQHPSEIIAIWDGGIAIYGAILGGFIVLLVFCHYRHLSSWLMMDIIAPTLIMAQGIGRWGNFMNQEAFGDITTRAHLMAQHIPNWIINQMYIGGHYRIPTFLYESLWDLTGFALLMLLRHRKHLFRRGEIFLTYVMWYAFGRFFIEGMRTDSLMLGSIRISQLLSIVFFVSALIILIIRRHKNIPWYYNGINKN</sequence>
<comment type="function">
    <text evidence="1">Catalyzes the transfer of the diacylglyceryl group from phosphatidylglycerol to the sulfhydryl group of the N-terminal cysteine of a prolipoprotein, the first step in the formation of mature lipoproteins.</text>
</comment>
<comment type="catalytic activity">
    <reaction evidence="1">
        <text>L-cysteinyl-[prolipoprotein] + a 1,2-diacyl-sn-glycero-3-phospho-(1'-sn-glycerol) = an S-1,2-diacyl-sn-glyceryl-L-cysteinyl-[prolipoprotein] + sn-glycerol 1-phosphate + H(+)</text>
        <dbReference type="Rhea" id="RHEA:56712"/>
        <dbReference type="Rhea" id="RHEA-COMP:14679"/>
        <dbReference type="Rhea" id="RHEA-COMP:14680"/>
        <dbReference type="ChEBI" id="CHEBI:15378"/>
        <dbReference type="ChEBI" id="CHEBI:29950"/>
        <dbReference type="ChEBI" id="CHEBI:57685"/>
        <dbReference type="ChEBI" id="CHEBI:64716"/>
        <dbReference type="ChEBI" id="CHEBI:140658"/>
        <dbReference type="EC" id="2.5.1.145"/>
    </reaction>
</comment>
<comment type="pathway">
    <text evidence="1">Protein modification; lipoprotein biosynthesis (diacylglyceryl transfer).</text>
</comment>
<comment type="subcellular location">
    <subcellularLocation>
        <location evidence="1">Cell membrane</location>
        <topology evidence="1">Multi-pass membrane protein</topology>
    </subcellularLocation>
</comment>
<comment type="similarity">
    <text evidence="1">Belongs to the Lgt family.</text>
</comment>
<proteinExistence type="inferred from homology"/>
<keyword id="KW-1003">Cell membrane</keyword>
<keyword id="KW-0472">Membrane</keyword>
<keyword id="KW-1185">Reference proteome</keyword>
<keyword id="KW-0808">Transferase</keyword>
<keyword id="KW-0812">Transmembrane</keyword>
<keyword id="KW-1133">Transmembrane helix</keyword>